<feature type="chain" id="PRO_0000277582" description="Photosystem II reaction center protein L">
    <location>
        <begin position="1"/>
        <end position="38"/>
    </location>
</feature>
<feature type="transmembrane region" description="Helical" evidence="2">
    <location>
        <begin position="17"/>
        <end position="37"/>
    </location>
</feature>
<proteinExistence type="inferred from homology"/>
<organism>
    <name type="scientific">Solanum tuberosum</name>
    <name type="common">Potato</name>
    <dbReference type="NCBI Taxonomy" id="4113"/>
    <lineage>
        <taxon>Eukaryota</taxon>
        <taxon>Viridiplantae</taxon>
        <taxon>Streptophyta</taxon>
        <taxon>Embryophyta</taxon>
        <taxon>Tracheophyta</taxon>
        <taxon>Spermatophyta</taxon>
        <taxon>Magnoliopsida</taxon>
        <taxon>eudicotyledons</taxon>
        <taxon>Gunneridae</taxon>
        <taxon>Pentapetalae</taxon>
        <taxon>asterids</taxon>
        <taxon>lamiids</taxon>
        <taxon>Solanales</taxon>
        <taxon>Solanaceae</taxon>
        <taxon>Solanoideae</taxon>
        <taxon>Solaneae</taxon>
        <taxon>Solanum</taxon>
    </lineage>
</organism>
<reference key="1">
    <citation type="journal article" date="2006" name="Plant Cell Rep.">
        <title>The complete chloroplast genome sequences of Solanum tuberosum and comparative analysis with Solanaceae species identified the presence of a 241-bp deletion in cultivated potato chloroplast DNA sequence.</title>
        <authorList>
            <person name="Chung H.-J."/>
            <person name="Jung J.D."/>
            <person name="Park H.-W."/>
            <person name="Kim J.-H."/>
            <person name="Cha H.W."/>
            <person name="Min S.R."/>
            <person name="Jeong W.-J."/>
            <person name="Liu J.R."/>
        </authorList>
    </citation>
    <scope>NUCLEOTIDE SEQUENCE [LARGE SCALE GENOMIC DNA]</scope>
    <source>
        <strain>cv. Desiree</strain>
    </source>
</reference>
<reference key="2">
    <citation type="submission" date="2006-02" db="EMBL/GenBank/DDBJ databases">
        <title>Complete chloroplast genome sequences of Solanum tuberosum cultivar Desiree and comparative analyses with other Solanaceae genomes.</title>
        <authorList>
            <person name="Gargano D."/>
            <person name="Scotti N."/>
            <person name="Vezzi A."/>
            <person name="Bilardi A."/>
            <person name="Valle G."/>
            <person name="Grillo S."/>
            <person name="Cardi T."/>
        </authorList>
    </citation>
    <scope>NUCLEOTIDE SEQUENCE [LARGE SCALE GENOMIC DNA]</scope>
    <source>
        <strain>cv. Desiree</strain>
    </source>
</reference>
<sequence>MTQSNPNEQNVELNRTSLYWGLLLIFVLAVLFSNYFFN</sequence>
<protein>
    <recommendedName>
        <fullName evidence="2">Photosystem II reaction center protein L</fullName>
        <shortName evidence="2">PSII-L</shortName>
    </recommendedName>
</protein>
<geneLocation type="chloroplast"/>
<keyword id="KW-0150">Chloroplast</keyword>
<keyword id="KW-0472">Membrane</keyword>
<keyword id="KW-0602">Photosynthesis</keyword>
<keyword id="KW-0604">Photosystem II</keyword>
<keyword id="KW-0934">Plastid</keyword>
<keyword id="KW-0674">Reaction center</keyword>
<keyword id="KW-1185">Reference proteome</keyword>
<keyword id="KW-0691">RNA editing</keyword>
<keyword id="KW-0793">Thylakoid</keyword>
<keyword id="KW-0812">Transmembrane</keyword>
<keyword id="KW-1133">Transmembrane helix</keyword>
<evidence type="ECO:0000250" key="1"/>
<evidence type="ECO:0000255" key="2">
    <source>
        <dbReference type="HAMAP-Rule" id="MF_01317"/>
    </source>
</evidence>
<gene>
    <name evidence="2" type="primary">psbL</name>
</gene>
<name>PSBL_SOLTU</name>
<dbReference type="EMBL" id="DQ231562">
    <property type="status" value="NOT_ANNOTATED_CDS"/>
    <property type="molecule type" value="Genomic_DNA"/>
</dbReference>
<dbReference type="EMBL" id="DQ386163">
    <property type="protein sequence ID" value="ABD47072.1"/>
    <property type="status" value="ALT_SEQ"/>
    <property type="molecule type" value="Genomic_DNA"/>
</dbReference>
<dbReference type="RefSeq" id="YP_635654.2">
    <property type="nucleotide sequence ID" value="NC_008096.2"/>
</dbReference>
<dbReference type="SMR" id="Q27S35"/>
<dbReference type="FunCoup" id="Q27S35">
    <property type="interactions" value="102"/>
</dbReference>
<dbReference type="STRING" id="4113.Q27S35"/>
<dbReference type="GeneID" id="4099992"/>
<dbReference type="KEGG" id="sot:4099992"/>
<dbReference type="InParanoid" id="Q27S35"/>
<dbReference type="OrthoDB" id="99at2759"/>
<dbReference type="Proteomes" id="UP000011115">
    <property type="component" value="Unassembled WGS sequence"/>
</dbReference>
<dbReference type="GO" id="GO:0009535">
    <property type="term" value="C:chloroplast thylakoid membrane"/>
    <property type="evidence" value="ECO:0007669"/>
    <property type="project" value="UniProtKB-SubCell"/>
</dbReference>
<dbReference type="GO" id="GO:0009539">
    <property type="term" value="C:photosystem II reaction center"/>
    <property type="evidence" value="ECO:0007669"/>
    <property type="project" value="InterPro"/>
</dbReference>
<dbReference type="GO" id="GO:0015979">
    <property type="term" value="P:photosynthesis"/>
    <property type="evidence" value="ECO:0007669"/>
    <property type="project" value="UniProtKB-UniRule"/>
</dbReference>
<dbReference type="HAMAP" id="MF_01317">
    <property type="entry name" value="PSII_PsbL"/>
    <property type="match status" value="1"/>
</dbReference>
<dbReference type="InterPro" id="IPR003372">
    <property type="entry name" value="PSII_PsbL"/>
</dbReference>
<dbReference type="InterPro" id="IPR037266">
    <property type="entry name" value="PSII_PsbL_sf"/>
</dbReference>
<dbReference type="NCBIfam" id="NF001972">
    <property type="entry name" value="PRK00753.1"/>
    <property type="match status" value="1"/>
</dbReference>
<dbReference type="Pfam" id="PF02419">
    <property type="entry name" value="PsbL"/>
    <property type="match status" value="1"/>
</dbReference>
<dbReference type="SUPFAM" id="SSF161017">
    <property type="entry name" value="Photosystem II reaction center protein L, PsbL"/>
    <property type="match status" value="1"/>
</dbReference>
<comment type="function">
    <text evidence="2">One of the components of the core complex of photosystem II (PSII). PSII is a light-driven water:plastoquinone oxidoreductase that uses light energy to abstract electrons from H(2)O, generating O(2) and a proton gradient subsequently used for ATP formation. It consists of a core antenna complex that captures photons, and an electron transfer chain that converts photonic excitation into a charge separation. This subunit is found at the monomer-monomer interface and is required for correct PSII assembly and/or dimerization.</text>
</comment>
<comment type="subunit">
    <text evidence="2">PSII is composed of 1 copy each of membrane proteins PsbA, PsbB, PsbC, PsbD, PsbE, PsbF, PsbH, PsbI, PsbJ, PsbK, PsbL, PsbM, PsbT, PsbX, PsbY, PsbZ, Psb30/Ycf12, at least 3 peripheral proteins of the oxygen-evolving complex and a large number of cofactors. It forms dimeric complexes.</text>
</comment>
<comment type="subcellular location">
    <subcellularLocation>
        <location evidence="2">Plastid</location>
        <location evidence="2">Chloroplast thylakoid membrane</location>
        <topology evidence="2">Single-pass membrane protein</topology>
    </subcellularLocation>
</comment>
<comment type="RNA editing">
    <location>
        <position position="1" evidence="1"/>
    </location>
    <text evidence="1">The initiator methionine is created by RNA editing.</text>
</comment>
<comment type="similarity">
    <text evidence="2">Belongs to the PsbL family.</text>
</comment>
<accession>Q27S35</accession>